<gene>
    <name evidence="1" type="primary">leuB</name>
    <name type="ordered locus">ACIAD0469</name>
</gene>
<organism>
    <name type="scientific">Acinetobacter baylyi (strain ATCC 33305 / BD413 / ADP1)</name>
    <dbReference type="NCBI Taxonomy" id="62977"/>
    <lineage>
        <taxon>Bacteria</taxon>
        <taxon>Pseudomonadati</taxon>
        <taxon>Pseudomonadota</taxon>
        <taxon>Gammaproteobacteria</taxon>
        <taxon>Moraxellales</taxon>
        <taxon>Moraxellaceae</taxon>
        <taxon>Acinetobacter</taxon>
    </lineage>
</organism>
<proteinExistence type="inferred from homology"/>
<sequence length="359" mass="38544">MSKQILILAGDGIGPEIVGAAEQVLTKVNEKFELGLTWEHGLLGGSAIDAHGEPYPAVTSEQAKKADAILLGAVGGPKWDTIERSIRPERGLLKIRSELNLFANLRPALLYPQLADASSLKPEIVAGLDILIVRELTGGIYFGQPRGIRELENGEKQGYNTDVYSESEIKRIAKVAFELAALRGSKVCSVDKANVLEVTELWKQTVTELQQAQYPNIQLSHMYVDNAAMQLVRAPKQFDVIVTGNLFGDILSDEAAMLTGSIGMLPSASLDENGKGMYEPCHGSAPDIAGQNVANPLATILSVAMMLRYTFREEAAAKAIEDAVGQVLDQGLRTADIMSEGMQRVGTVEMGQAVVAALA</sequence>
<comment type="function">
    <text evidence="1">Catalyzes the oxidation of 3-carboxy-2-hydroxy-4-methylpentanoate (3-isopropylmalate) to 3-carboxy-4-methyl-2-oxopentanoate. The product decarboxylates to 4-methyl-2 oxopentanoate.</text>
</comment>
<comment type="catalytic activity">
    <reaction evidence="1">
        <text>(2R,3S)-3-isopropylmalate + NAD(+) = 4-methyl-2-oxopentanoate + CO2 + NADH</text>
        <dbReference type="Rhea" id="RHEA:32271"/>
        <dbReference type="ChEBI" id="CHEBI:16526"/>
        <dbReference type="ChEBI" id="CHEBI:17865"/>
        <dbReference type="ChEBI" id="CHEBI:35121"/>
        <dbReference type="ChEBI" id="CHEBI:57540"/>
        <dbReference type="ChEBI" id="CHEBI:57945"/>
        <dbReference type="EC" id="1.1.1.85"/>
    </reaction>
</comment>
<comment type="cofactor">
    <cofactor evidence="1">
        <name>Mg(2+)</name>
        <dbReference type="ChEBI" id="CHEBI:18420"/>
    </cofactor>
    <cofactor evidence="1">
        <name>Mn(2+)</name>
        <dbReference type="ChEBI" id="CHEBI:29035"/>
    </cofactor>
    <text evidence="1">Binds 1 Mg(2+) or Mn(2+) ion per subunit.</text>
</comment>
<comment type="pathway">
    <text evidence="1">Amino-acid biosynthesis; L-leucine biosynthesis; L-leucine from 3-methyl-2-oxobutanoate: step 3/4.</text>
</comment>
<comment type="subunit">
    <text evidence="1">Homodimer.</text>
</comment>
<comment type="subcellular location">
    <subcellularLocation>
        <location evidence="1">Cytoplasm</location>
    </subcellularLocation>
</comment>
<comment type="similarity">
    <text evidence="1">Belongs to the isocitrate and isopropylmalate dehydrogenases family. LeuB type 1 subfamily.</text>
</comment>
<dbReference type="EC" id="1.1.1.85" evidence="1"/>
<dbReference type="EMBL" id="CR543861">
    <property type="protein sequence ID" value="CAG67402.1"/>
    <property type="molecule type" value="Genomic_DNA"/>
</dbReference>
<dbReference type="RefSeq" id="WP_004920228.1">
    <property type="nucleotide sequence ID" value="NC_005966.1"/>
</dbReference>
<dbReference type="SMR" id="Q6FEV6"/>
<dbReference type="STRING" id="202950.GCA_001485005_00716"/>
<dbReference type="GeneID" id="45232957"/>
<dbReference type="KEGG" id="aci:ACIAD0469"/>
<dbReference type="eggNOG" id="COG0473">
    <property type="taxonomic scope" value="Bacteria"/>
</dbReference>
<dbReference type="HOGENOM" id="CLU_031953_0_3_6"/>
<dbReference type="OrthoDB" id="9767905at2"/>
<dbReference type="BioCyc" id="ASP62977:ACIAD_RS02145-MONOMER"/>
<dbReference type="UniPathway" id="UPA00048">
    <property type="reaction ID" value="UER00072"/>
</dbReference>
<dbReference type="Proteomes" id="UP000000430">
    <property type="component" value="Chromosome"/>
</dbReference>
<dbReference type="GO" id="GO:0005829">
    <property type="term" value="C:cytosol"/>
    <property type="evidence" value="ECO:0007669"/>
    <property type="project" value="TreeGrafter"/>
</dbReference>
<dbReference type="GO" id="GO:0003862">
    <property type="term" value="F:3-isopropylmalate dehydrogenase activity"/>
    <property type="evidence" value="ECO:0007669"/>
    <property type="project" value="UniProtKB-UniRule"/>
</dbReference>
<dbReference type="GO" id="GO:0000287">
    <property type="term" value="F:magnesium ion binding"/>
    <property type="evidence" value="ECO:0007669"/>
    <property type="project" value="InterPro"/>
</dbReference>
<dbReference type="GO" id="GO:0051287">
    <property type="term" value="F:NAD binding"/>
    <property type="evidence" value="ECO:0007669"/>
    <property type="project" value="InterPro"/>
</dbReference>
<dbReference type="GO" id="GO:0009098">
    <property type="term" value="P:L-leucine biosynthetic process"/>
    <property type="evidence" value="ECO:0007669"/>
    <property type="project" value="UniProtKB-UniRule"/>
</dbReference>
<dbReference type="FunFam" id="3.40.718.10:FF:000004">
    <property type="entry name" value="3-isopropylmalate dehydrogenase"/>
    <property type="match status" value="1"/>
</dbReference>
<dbReference type="Gene3D" id="3.40.718.10">
    <property type="entry name" value="Isopropylmalate Dehydrogenase"/>
    <property type="match status" value="1"/>
</dbReference>
<dbReference type="HAMAP" id="MF_01033">
    <property type="entry name" value="LeuB_type1"/>
    <property type="match status" value="1"/>
</dbReference>
<dbReference type="InterPro" id="IPR019818">
    <property type="entry name" value="IsoCit/isopropylmalate_DH_CS"/>
</dbReference>
<dbReference type="InterPro" id="IPR024084">
    <property type="entry name" value="IsoPropMal-DH-like_dom"/>
</dbReference>
<dbReference type="InterPro" id="IPR004429">
    <property type="entry name" value="Isopropylmalate_DH"/>
</dbReference>
<dbReference type="NCBIfam" id="TIGR00169">
    <property type="entry name" value="leuB"/>
    <property type="match status" value="1"/>
</dbReference>
<dbReference type="PANTHER" id="PTHR42979">
    <property type="entry name" value="3-ISOPROPYLMALATE DEHYDROGENASE"/>
    <property type="match status" value="1"/>
</dbReference>
<dbReference type="PANTHER" id="PTHR42979:SF1">
    <property type="entry name" value="3-ISOPROPYLMALATE DEHYDROGENASE"/>
    <property type="match status" value="1"/>
</dbReference>
<dbReference type="Pfam" id="PF00180">
    <property type="entry name" value="Iso_dh"/>
    <property type="match status" value="1"/>
</dbReference>
<dbReference type="SMART" id="SM01329">
    <property type="entry name" value="Iso_dh"/>
    <property type="match status" value="1"/>
</dbReference>
<dbReference type="SUPFAM" id="SSF53659">
    <property type="entry name" value="Isocitrate/Isopropylmalate dehydrogenase-like"/>
    <property type="match status" value="1"/>
</dbReference>
<dbReference type="PROSITE" id="PS00470">
    <property type="entry name" value="IDH_IMDH"/>
    <property type="match status" value="1"/>
</dbReference>
<keyword id="KW-0028">Amino-acid biosynthesis</keyword>
<keyword id="KW-0100">Branched-chain amino acid biosynthesis</keyword>
<keyword id="KW-0963">Cytoplasm</keyword>
<keyword id="KW-0432">Leucine biosynthesis</keyword>
<keyword id="KW-0460">Magnesium</keyword>
<keyword id="KW-0464">Manganese</keyword>
<keyword id="KW-0479">Metal-binding</keyword>
<keyword id="KW-0520">NAD</keyword>
<keyword id="KW-0560">Oxidoreductase</keyword>
<accession>Q6FEV6</accession>
<feature type="chain" id="PRO_0000083626" description="3-isopropylmalate dehydrogenase">
    <location>
        <begin position="1"/>
        <end position="359"/>
    </location>
</feature>
<feature type="binding site" evidence="1">
    <location>
        <begin position="76"/>
        <end position="89"/>
    </location>
    <ligand>
        <name>NAD(+)</name>
        <dbReference type="ChEBI" id="CHEBI:57540"/>
    </ligand>
</feature>
<feature type="binding site" evidence="1">
    <location>
        <position position="96"/>
    </location>
    <ligand>
        <name>substrate</name>
    </ligand>
</feature>
<feature type="binding site" evidence="1">
    <location>
        <position position="106"/>
    </location>
    <ligand>
        <name>substrate</name>
    </ligand>
</feature>
<feature type="binding site" evidence="1">
    <location>
        <position position="134"/>
    </location>
    <ligand>
        <name>substrate</name>
    </ligand>
</feature>
<feature type="binding site" evidence="1">
    <location>
        <position position="225"/>
    </location>
    <ligand>
        <name>Mg(2+)</name>
        <dbReference type="ChEBI" id="CHEBI:18420"/>
    </ligand>
</feature>
<feature type="binding site" evidence="1">
    <location>
        <position position="225"/>
    </location>
    <ligand>
        <name>substrate</name>
    </ligand>
</feature>
<feature type="binding site" evidence="1">
    <location>
        <position position="249"/>
    </location>
    <ligand>
        <name>Mg(2+)</name>
        <dbReference type="ChEBI" id="CHEBI:18420"/>
    </ligand>
</feature>
<feature type="binding site" evidence="1">
    <location>
        <position position="253"/>
    </location>
    <ligand>
        <name>Mg(2+)</name>
        <dbReference type="ChEBI" id="CHEBI:18420"/>
    </ligand>
</feature>
<feature type="binding site" evidence="1">
    <location>
        <begin position="283"/>
        <end position="295"/>
    </location>
    <ligand>
        <name>NAD(+)</name>
        <dbReference type="ChEBI" id="CHEBI:57540"/>
    </ligand>
</feature>
<feature type="site" description="Important for catalysis" evidence="1">
    <location>
        <position position="141"/>
    </location>
</feature>
<feature type="site" description="Important for catalysis" evidence="1">
    <location>
        <position position="192"/>
    </location>
</feature>
<evidence type="ECO:0000255" key="1">
    <source>
        <dbReference type="HAMAP-Rule" id="MF_01033"/>
    </source>
</evidence>
<protein>
    <recommendedName>
        <fullName evidence="1">3-isopropylmalate dehydrogenase</fullName>
        <ecNumber evidence="1">1.1.1.85</ecNumber>
    </recommendedName>
    <alternativeName>
        <fullName evidence="1">3-IPM-DH</fullName>
    </alternativeName>
    <alternativeName>
        <fullName evidence="1">Beta-IPM dehydrogenase</fullName>
        <shortName evidence="1">IMDH</shortName>
    </alternativeName>
</protein>
<name>LEU3_ACIAD</name>
<reference key="1">
    <citation type="journal article" date="2004" name="Nucleic Acids Res.">
        <title>Unique features revealed by the genome sequence of Acinetobacter sp. ADP1, a versatile and naturally transformation competent bacterium.</title>
        <authorList>
            <person name="Barbe V."/>
            <person name="Vallenet D."/>
            <person name="Fonknechten N."/>
            <person name="Kreimeyer A."/>
            <person name="Oztas S."/>
            <person name="Labarre L."/>
            <person name="Cruveiller S."/>
            <person name="Robert C."/>
            <person name="Duprat S."/>
            <person name="Wincker P."/>
            <person name="Ornston L.N."/>
            <person name="Weissenbach J."/>
            <person name="Marliere P."/>
            <person name="Cohen G.N."/>
            <person name="Medigue C."/>
        </authorList>
    </citation>
    <scope>NUCLEOTIDE SEQUENCE [LARGE SCALE GENOMIC DNA]</scope>
    <source>
        <strain>ATCC 33305 / BD413 / ADP1</strain>
    </source>
</reference>